<keyword id="KW-1003">Cell membrane</keyword>
<keyword id="KW-0449">Lipoprotein</keyword>
<keyword id="KW-0472">Membrane</keyword>
<keyword id="KW-0564">Palmitate</keyword>
<keyword id="KW-1185">Reference proteome</keyword>
<keyword id="KW-0732">Signal</keyword>
<evidence type="ECO:0000255" key="1">
    <source>
        <dbReference type="PROSITE-ProRule" id="PRU00303"/>
    </source>
</evidence>
<evidence type="ECO:0000305" key="2"/>
<dbReference type="EMBL" id="L13280">
    <property type="protein sequence ID" value="AAA71971.1"/>
    <property type="molecule type" value="Unassigned_DNA"/>
</dbReference>
<dbReference type="EMBL" id="AE006468">
    <property type="protein sequence ID" value="AAL20876.1"/>
    <property type="molecule type" value="Genomic_DNA"/>
</dbReference>
<dbReference type="RefSeq" id="NP_460917.1">
    <property type="nucleotide sequence ID" value="NC_003197.2"/>
</dbReference>
<dbReference type="RefSeq" id="WP_000754695.1">
    <property type="nucleotide sequence ID" value="NC_003197.2"/>
</dbReference>
<dbReference type="SMR" id="Q06399"/>
<dbReference type="STRING" id="99287.STM1964"/>
<dbReference type="PaxDb" id="99287-STM1964"/>
<dbReference type="GeneID" id="1253485"/>
<dbReference type="KEGG" id="stm:STM1964"/>
<dbReference type="PATRIC" id="fig|99287.12.peg.2080"/>
<dbReference type="HOGENOM" id="CLU_139754_0_0_6"/>
<dbReference type="OMA" id="AGYWQSK"/>
<dbReference type="PhylomeDB" id="Q06399"/>
<dbReference type="BioCyc" id="SENT99287:STM1964-MONOMER"/>
<dbReference type="Proteomes" id="UP000001014">
    <property type="component" value="Chromosome"/>
</dbReference>
<dbReference type="GO" id="GO:0005886">
    <property type="term" value="C:plasma membrane"/>
    <property type="evidence" value="ECO:0007669"/>
    <property type="project" value="UniProtKB-SubCell"/>
</dbReference>
<dbReference type="Gene3D" id="2.40.128.500">
    <property type="entry name" value="YedD-like protein"/>
    <property type="match status" value="1"/>
</dbReference>
<dbReference type="InterPro" id="IPR025596">
    <property type="entry name" value="YedD"/>
</dbReference>
<dbReference type="InterPro" id="IPR038624">
    <property type="entry name" value="YedD-like_sf"/>
</dbReference>
<dbReference type="NCBIfam" id="NF007705">
    <property type="entry name" value="PRK10397.1"/>
    <property type="match status" value="1"/>
</dbReference>
<dbReference type="Pfam" id="PF13987">
    <property type="entry name" value="YedD"/>
    <property type="match status" value="1"/>
</dbReference>
<dbReference type="PROSITE" id="PS51257">
    <property type="entry name" value="PROKAR_LIPOPROTEIN"/>
    <property type="match status" value="1"/>
</dbReference>
<accession>Q06399</accession>
<protein>
    <recommendedName>
        <fullName>Uncharacterized lipoprotein YedD</fullName>
    </recommendedName>
</protein>
<comment type="subcellular location">
    <subcellularLocation>
        <location evidence="1">Cell membrane</location>
        <topology evidence="1">Lipid-anchor</topology>
    </subcellularLocation>
</comment>
<proteinExistence type="inferred from homology"/>
<organism>
    <name type="scientific">Salmonella typhimurium (strain LT2 / SGSC1412 / ATCC 700720)</name>
    <dbReference type="NCBI Taxonomy" id="99287"/>
    <lineage>
        <taxon>Bacteria</taxon>
        <taxon>Pseudomonadati</taxon>
        <taxon>Pseudomonadota</taxon>
        <taxon>Gammaproteobacteria</taxon>
        <taxon>Enterobacterales</taxon>
        <taxon>Enterobacteriaceae</taxon>
        <taxon>Salmonella</taxon>
    </lineage>
</organism>
<gene>
    <name type="primary">yedD</name>
    <name type="ordered locus">STM1964</name>
</gene>
<reference key="1">
    <citation type="journal article" date="1993" name="J. Gen. Microbiol.">
        <title>Organization of the Escherichia coli and Salmonella typhimurium chromosomes between flagellar regions IIIa and IIIb, including a large non-coding region.</title>
        <authorList>
            <person name="Raha M."/>
            <person name="Kihara M."/>
            <person name="Kawagishi I."/>
            <person name="Macnab R.M."/>
        </authorList>
    </citation>
    <scope>NUCLEOTIDE SEQUENCE [GENOMIC DNA]</scope>
    <source>
        <strain>SJW1103</strain>
    </source>
</reference>
<reference key="2">
    <citation type="journal article" date="2001" name="Nature">
        <title>Complete genome sequence of Salmonella enterica serovar Typhimurium LT2.</title>
        <authorList>
            <person name="McClelland M."/>
            <person name="Sanderson K.E."/>
            <person name="Spieth J."/>
            <person name="Clifton S.W."/>
            <person name="Latreille P."/>
            <person name="Courtney L."/>
            <person name="Porwollik S."/>
            <person name="Ali J."/>
            <person name="Dante M."/>
            <person name="Du F."/>
            <person name="Hou S."/>
            <person name="Layman D."/>
            <person name="Leonard S."/>
            <person name="Nguyen C."/>
            <person name="Scott K."/>
            <person name="Holmes A."/>
            <person name="Grewal N."/>
            <person name="Mulvaney E."/>
            <person name="Ryan E."/>
            <person name="Sun H."/>
            <person name="Florea L."/>
            <person name="Miller W."/>
            <person name="Stoneking T."/>
            <person name="Nhan M."/>
            <person name="Waterston R."/>
            <person name="Wilson R.K."/>
        </authorList>
    </citation>
    <scope>NUCLEOTIDE SEQUENCE [LARGE SCALE GENOMIC DNA]</scope>
    <source>
        <strain>LT2 / SGSC1412 / ATCC 700720</strain>
    </source>
</reference>
<name>YEDD_SALTY</name>
<feature type="signal peptide" evidence="1">
    <location>
        <begin position="1"/>
        <end position="15"/>
    </location>
</feature>
<feature type="chain" id="PRO_0000013864" description="Uncharacterized lipoprotein YedD">
    <location>
        <begin position="16"/>
        <end position="141"/>
    </location>
</feature>
<feature type="lipid moiety-binding region" description="N-palmitoyl cysteine" evidence="1">
    <location>
        <position position="16"/>
    </location>
</feature>
<feature type="lipid moiety-binding region" description="S-diacylglycerol cysteine" evidence="1">
    <location>
        <position position="16"/>
    </location>
</feature>
<feature type="sequence conflict" description="In Ref. 1; AAA71971." evidence="2" ref="1">
    <original>CA</original>
    <variation>WP</variation>
    <location>
        <begin position="123"/>
        <end position="124"/>
    </location>
</feature>
<sequence length="141" mass="15356">MKKVAIVGALLVLAGCAEVENYNDVVKTPAPAGLEGYWQSKGPQRKLVSPEAIASLVVTKEGDTLDCRQWQRVIALPGKLTMLSDDLTNVTVKRELYEIERDGNTLEYDGMTLQRVARPTPECAAALEKTPLPTPLPTPLP</sequence>